<organism>
    <name type="scientific">Escherichia coli O139:H28 (strain E24377A / ETEC)</name>
    <dbReference type="NCBI Taxonomy" id="331111"/>
    <lineage>
        <taxon>Bacteria</taxon>
        <taxon>Pseudomonadati</taxon>
        <taxon>Pseudomonadota</taxon>
        <taxon>Gammaproteobacteria</taxon>
        <taxon>Enterobacterales</taxon>
        <taxon>Enterobacteriaceae</taxon>
        <taxon>Escherichia</taxon>
    </lineage>
</organism>
<accession>A7ZNT3</accession>
<protein>
    <recommendedName>
        <fullName evidence="1">Methionine--tRNA ligase</fullName>
        <ecNumber evidence="1">6.1.1.10</ecNumber>
    </recommendedName>
    <alternativeName>
        <fullName evidence="1">Methionyl-tRNA synthetase</fullName>
        <shortName evidence="1">MetRS</shortName>
    </alternativeName>
</protein>
<reference key="1">
    <citation type="journal article" date="2008" name="J. Bacteriol.">
        <title>The pangenome structure of Escherichia coli: comparative genomic analysis of E. coli commensal and pathogenic isolates.</title>
        <authorList>
            <person name="Rasko D.A."/>
            <person name="Rosovitz M.J."/>
            <person name="Myers G.S.A."/>
            <person name="Mongodin E.F."/>
            <person name="Fricke W.F."/>
            <person name="Gajer P."/>
            <person name="Crabtree J."/>
            <person name="Sebaihia M."/>
            <person name="Thomson N.R."/>
            <person name="Chaudhuri R."/>
            <person name="Henderson I.R."/>
            <person name="Sperandio V."/>
            <person name="Ravel J."/>
        </authorList>
    </citation>
    <scope>NUCLEOTIDE SEQUENCE [LARGE SCALE GENOMIC DNA]</scope>
    <source>
        <strain>E24377A / ETEC</strain>
    </source>
</reference>
<feature type="chain" id="PRO_0000331819" description="Methionine--tRNA ligase">
    <location>
        <begin position="1"/>
        <end position="677"/>
    </location>
</feature>
<feature type="domain" description="tRNA-binding" evidence="1">
    <location>
        <begin position="575"/>
        <end position="677"/>
    </location>
</feature>
<feature type="short sequence motif" description="'HIGH' region">
    <location>
        <begin position="15"/>
        <end position="25"/>
    </location>
</feature>
<feature type="short sequence motif" description="'KMSKS' region">
    <location>
        <begin position="333"/>
        <end position="337"/>
    </location>
</feature>
<feature type="binding site" evidence="1">
    <location>
        <position position="146"/>
    </location>
    <ligand>
        <name>Zn(2+)</name>
        <dbReference type="ChEBI" id="CHEBI:29105"/>
    </ligand>
</feature>
<feature type="binding site" evidence="1">
    <location>
        <position position="149"/>
    </location>
    <ligand>
        <name>Zn(2+)</name>
        <dbReference type="ChEBI" id="CHEBI:29105"/>
    </ligand>
</feature>
<feature type="binding site" evidence="1">
    <location>
        <position position="159"/>
    </location>
    <ligand>
        <name>Zn(2+)</name>
        <dbReference type="ChEBI" id="CHEBI:29105"/>
    </ligand>
</feature>
<feature type="binding site" evidence="1">
    <location>
        <position position="162"/>
    </location>
    <ligand>
        <name>Zn(2+)</name>
        <dbReference type="ChEBI" id="CHEBI:29105"/>
    </ligand>
</feature>
<feature type="binding site" evidence="1">
    <location>
        <position position="336"/>
    </location>
    <ligand>
        <name>ATP</name>
        <dbReference type="ChEBI" id="CHEBI:30616"/>
    </ligand>
</feature>
<keyword id="KW-0030">Aminoacyl-tRNA synthetase</keyword>
<keyword id="KW-0067">ATP-binding</keyword>
<keyword id="KW-0963">Cytoplasm</keyword>
<keyword id="KW-0436">Ligase</keyword>
<keyword id="KW-0479">Metal-binding</keyword>
<keyword id="KW-0547">Nucleotide-binding</keyword>
<keyword id="KW-0648">Protein biosynthesis</keyword>
<keyword id="KW-1185">Reference proteome</keyword>
<keyword id="KW-0694">RNA-binding</keyword>
<keyword id="KW-0820">tRNA-binding</keyword>
<keyword id="KW-0862">Zinc</keyword>
<dbReference type="EC" id="6.1.1.10" evidence="1"/>
<dbReference type="EMBL" id="CP000800">
    <property type="protein sequence ID" value="ABV18955.1"/>
    <property type="molecule type" value="Genomic_DNA"/>
</dbReference>
<dbReference type="RefSeq" id="WP_001295427.1">
    <property type="nucleotide sequence ID" value="NC_009801.1"/>
</dbReference>
<dbReference type="SMR" id="A7ZNT3"/>
<dbReference type="GeneID" id="75206361"/>
<dbReference type="KEGG" id="ecw:EcE24377A_2404"/>
<dbReference type="HOGENOM" id="CLU_009710_7_0_6"/>
<dbReference type="Proteomes" id="UP000001122">
    <property type="component" value="Chromosome"/>
</dbReference>
<dbReference type="GO" id="GO:0005829">
    <property type="term" value="C:cytosol"/>
    <property type="evidence" value="ECO:0007669"/>
    <property type="project" value="TreeGrafter"/>
</dbReference>
<dbReference type="GO" id="GO:0005524">
    <property type="term" value="F:ATP binding"/>
    <property type="evidence" value="ECO:0007669"/>
    <property type="project" value="UniProtKB-UniRule"/>
</dbReference>
<dbReference type="GO" id="GO:0046872">
    <property type="term" value="F:metal ion binding"/>
    <property type="evidence" value="ECO:0007669"/>
    <property type="project" value="UniProtKB-KW"/>
</dbReference>
<dbReference type="GO" id="GO:0004825">
    <property type="term" value="F:methionine-tRNA ligase activity"/>
    <property type="evidence" value="ECO:0007669"/>
    <property type="project" value="UniProtKB-UniRule"/>
</dbReference>
<dbReference type="GO" id="GO:0000049">
    <property type="term" value="F:tRNA binding"/>
    <property type="evidence" value="ECO:0007669"/>
    <property type="project" value="UniProtKB-KW"/>
</dbReference>
<dbReference type="GO" id="GO:0006431">
    <property type="term" value="P:methionyl-tRNA aminoacylation"/>
    <property type="evidence" value="ECO:0007669"/>
    <property type="project" value="UniProtKB-UniRule"/>
</dbReference>
<dbReference type="CDD" id="cd07957">
    <property type="entry name" value="Anticodon_Ia_Met"/>
    <property type="match status" value="1"/>
</dbReference>
<dbReference type="CDD" id="cd00814">
    <property type="entry name" value="MetRS_core"/>
    <property type="match status" value="1"/>
</dbReference>
<dbReference type="CDD" id="cd02800">
    <property type="entry name" value="tRNA_bind_EcMetRS_like"/>
    <property type="match status" value="1"/>
</dbReference>
<dbReference type="FunFam" id="1.10.730.10:FF:000005">
    <property type="entry name" value="Methionine--tRNA ligase"/>
    <property type="match status" value="1"/>
</dbReference>
<dbReference type="FunFam" id="2.20.28.20:FF:000001">
    <property type="entry name" value="Methionine--tRNA ligase"/>
    <property type="match status" value="1"/>
</dbReference>
<dbReference type="FunFam" id="2.40.50.140:FF:000042">
    <property type="entry name" value="Methionine--tRNA ligase"/>
    <property type="match status" value="1"/>
</dbReference>
<dbReference type="Gene3D" id="3.40.50.620">
    <property type="entry name" value="HUPs"/>
    <property type="match status" value="1"/>
</dbReference>
<dbReference type="Gene3D" id="1.10.730.10">
    <property type="entry name" value="Isoleucyl-tRNA Synthetase, Domain 1"/>
    <property type="match status" value="1"/>
</dbReference>
<dbReference type="Gene3D" id="2.20.28.20">
    <property type="entry name" value="Methionyl-tRNA synthetase, Zn-domain"/>
    <property type="match status" value="1"/>
</dbReference>
<dbReference type="Gene3D" id="2.40.50.140">
    <property type="entry name" value="Nucleic acid-binding proteins"/>
    <property type="match status" value="1"/>
</dbReference>
<dbReference type="HAMAP" id="MF_00098">
    <property type="entry name" value="Met_tRNA_synth_type1"/>
    <property type="match status" value="1"/>
</dbReference>
<dbReference type="InterPro" id="IPR001412">
    <property type="entry name" value="aa-tRNA-synth_I_CS"/>
</dbReference>
<dbReference type="InterPro" id="IPR041872">
    <property type="entry name" value="Anticodon_Met"/>
</dbReference>
<dbReference type="InterPro" id="IPR004495">
    <property type="entry name" value="Met-tRNA-synth_bsu_C"/>
</dbReference>
<dbReference type="InterPro" id="IPR023458">
    <property type="entry name" value="Met-tRNA_ligase_1"/>
</dbReference>
<dbReference type="InterPro" id="IPR014758">
    <property type="entry name" value="Met-tRNA_synth"/>
</dbReference>
<dbReference type="InterPro" id="IPR015413">
    <property type="entry name" value="Methionyl/Leucyl_tRNA_Synth"/>
</dbReference>
<dbReference type="InterPro" id="IPR033911">
    <property type="entry name" value="MetRS_core"/>
</dbReference>
<dbReference type="InterPro" id="IPR029038">
    <property type="entry name" value="MetRS_Zn"/>
</dbReference>
<dbReference type="InterPro" id="IPR012340">
    <property type="entry name" value="NA-bd_OB-fold"/>
</dbReference>
<dbReference type="InterPro" id="IPR014729">
    <property type="entry name" value="Rossmann-like_a/b/a_fold"/>
</dbReference>
<dbReference type="InterPro" id="IPR002547">
    <property type="entry name" value="tRNA-bd_dom"/>
</dbReference>
<dbReference type="InterPro" id="IPR009080">
    <property type="entry name" value="tRNAsynth_Ia_anticodon-bd"/>
</dbReference>
<dbReference type="NCBIfam" id="TIGR00398">
    <property type="entry name" value="metG"/>
    <property type="match status" value="1"/>
</dbReference>
<dbReference type="NCBIfam" id="TIGR00399">
    <property type="entry name" value="metG_C_term"/>
    <property type="match status" value="1"/>
</dbReference>
<dbReference type="NCBIfam" id="NF001100">
    <property type="entry name" value="PRK00133.1"/>
    <property type="match status" value="1"/>
</dbReference>
<dbReference type="PANTHER" id="PTHR45765">
    <property type="entry name" value="METHIONINE--TRNA LIGASE"/>
    <property type="match status" value="1"/>
</dbReference>
<dbReference type="PANTHER" id="PTHR45765:SF1">
    <property type="entry name" value="METHIONINE--TRNA LIGASE, CYTOPLASMIC"/>
    <property type="match status" value="1"/>
</dbReference>
<dbReference type="Pfam" id="PF19303">
    <property type="entry name" value="Anticodon_3"/>
    <property type="match status" value="1"/>
</dbReference>
<dbReference type="Pfam" id="PF09334">
    <property type="entry name" value="tRNA-synt_1g"/>
    <property type="match status" value="1"/>
</dbReference>
<dbReference type="Pfam" id="PF01588">
    <property type="entry name" value="tRNA_bind"/>
    <property type="match status" value="1"/>
</dbReference>
<dbReference type="PRINTS" id="PR01041">
    <property type="entry name" value="TRNASYNTHMET"/>
</dbReference>
<dbReference type="SUPFAM" id="SSF47323">
    <property type="entry name" value="Anticodon-binding domain of a subclass of class I aminoacyl-tRNA synthetases"/>
    <property type="match status" value="1"/>
</dbReference>
<dbReference type="SUPFAM" id="SSF57770">
    <property type="entry name" value="Methionyl-tRNA synthetase (MetRS), Zn-domain"/>
    <property type="match status" value="1"/>
</dbReference>
<dbReference type="SUPFAM" id="SSF50249">
    <property type="entry name" value="Nucleic acid-binding proteins"/>
    <property type="match status" value="1"/>
</dbReference>
<dbReference type="SUPFAM" id="SSF52374">
    <property type="entry name" value="Nucleotidylyl transferase"/>
    <property type="match status" value="1"/>
</dbReference>
<dbReference type="PROSITE" id="PS00178">
    <property type="entry name" value="AA_TRNA_LIGASE_I"/>
    <property type="match status" value="1"/>
</dbReference>
<dbReference type="PROSITE" id="PS50886">
    <property type="entry name" value="TRBD"/>
    <property type="match status" value="1"/>
</dbReference>
<name>SYM_ECO24</name>
<proteinExistence type="inferred from homology"/>
<sequence>MTQVAKKILVTCALPYANGSIHLGHMLEHIQADVWVRYQRMRGHEVNFICADDAHGTPIMLKAQQLGITPEQMIGEMSQEHQTDFAGFNISYDNYHSTHSEENRQLSELIYSRLKENGFIKNRTISQLYDPEKGMFLPDRFVKGTCPKCKSPDQYGDNCEVCGATYSPTELIEPKSVVSGATPVMRDSEHFFFDLPSFSEMLQAWTRSGALQEQVANKMQEWFESGLQQWDISRDAPYFGFEIPNAPGKYFYVWLDAPIGYMGSFKNLCDKRGDSVSFDEYWKKDSTAELYHFIGKDIVYFHSLFWPAMLEGSNFRKPTNLFVHGYVTVNGAKMSKSRGTFIKASTWLNHFDADSLRYYYTAKLSSRIDDIDLNLEDFVQRVNADIVNKVVNLASRNAGFINKRFDGVLASELADPQLYKTFTDAAEVIGEAWESREFGKAVREIMALADLANRYVDEQAPWVVAKQEGRDADLQAICSMGINLFRVLMTYLKPVLPKLTERAEAFLNTELTWDGIQQPLLGHKVNPFKALYNRIDMKQVEALVEASKEEVKAAAAPVTGPLADDPIQETITFDDFAKVDLRVALIENAEFVEGSDKLLRLTLDLGGEKRNVFSGIRSAYPDPQALIGRHTIMVANLAPRKMRFGISEGMVMAAGPGGKDIFLLSPDAGAKPGHQVK</sequence>
<gene>
    <name evidence="1" type="primary">metG</name>
    <name type="ordered locus">EcE24377A_2404</name>
</gene>
<comment type="function">
    <text evidence="1">Is required not only for elongation of protein synthesis but also for the initiation of all mRNA translation through initiator tRNA(fMet) aminoacylation.</text>
</comment>
<comment type="catalytic activity">
    <reaction evidence="1">
        <text>tRNA(Met) + L-methionine + ATP = L-methionyl-tRNA(Met) + AMP + diphosphate</text>
        <dbReference type="Rhea" id="RHEA:13481"/>
        <dbReference type="Rhea" id="RHEA-COMP:9667"/>
        <dbReference type="Rhea" id="RHEA-COMP:9698"/>
        <dbReference type="ChEBI" id="CHEBI:30616"/>
        <dbReference type="ChEBI" id="CHEBI:33019"/>
        <dbReference type="ChEBI" id="CHEBI:57844"/>
        <dbReference type="ChEBI" id="CHEBI:78442"/>
        <dbReference type="ChEBI" id="CHEBI:78530"/>
        <dbReference type="ChEBI" id="CHEBI:456215"/>
        <dbReference type="EC" id="6.1.1.10"/>
    </reaction>
</comment>
<comment type="cofactor">
    <cofactor evidence="1">
        <name>Zn(2+)</name>
        <dbReference type="ChEBI" id="CHEBI:29105"/>
    </cofactor>
    <text evidence="1">Binds 1 zinc ion per subunit.</text>
</comment>
<comment type="subunit">
    <text evidence="1">Homodimer.</text>
</comment>
<comment type="subcellular location">
    <subcellularLocation>
        <location evidence="1">Cytoplasm</location>
    </subcellularLocation>
</comment>
<comment type="similarity">
    <text evidence="1">Belongs to the class-I aminoacyl-tRNA synthetase family. MetG type 1 subfamily.</text>
</comment>
<evidence type="ECO:0000255" key="1">
    <source>
        <dbReference type="HAMAP-Rule" id="MF_00098"/>
    </source>
</evidence>